<protein>
    <recommendedName>
        <fullName>Sporulation-specific protein 6</fullName>
    </recommendedName>
</protein>
<organism>
    <name type="scientific">Schizosaccharomyces pombe (strain 972 / ATCC 24843)</name>
    <name type="common">Fission yeast</name>
    <dbReference type="NCBI Taxonomy" id="284812"/>
    <lineage>
        <taxon>Eukaryota</taxon>
        <taxon>Fungi</taxon>
        <taxon>Dikarya</taxon>
        <taxon>Ascomycota</taxon>
        <taxon>Taphrinomycotina</taxon>
        <taxon>Schizosaccharomycetes</taxon>
        <taxon>Schizosaccharomycetales</taxon>
        <taxon>Schizosaccharomycetaceae</taxon>
        <taxon>Schizosaccharomyces</taxon>
    </lineage>
</organism>
<dbReference type="EMBL" id="CU329671">
    <property type="protein sequence ID" value="CAB39799.1"/>
    <property type="molecule type" value="Genomic_DNA"/>
</dbReference>
<dbReference type="EMBL" id="AB020809">
    <property type="protein sequence ID" value="BAA82783.1"/>
    <property type="molecule type" value="Genomic_DNA"/>
</dbReference>
<dbReference type="PIR" id="T43504">
    <property type="entry name" value="T43504"/>
</dbReference>
<dbReference type="RefSeq" id="NP_596287.1">
    <property type="nucleotide sequence ID" value="NM_001022209.2"/>
</dbReference>
<dbReference type="SMR" id="Q9Y7J1"/>
<dbReference type="BioGRID" id="276582">
    <property type="interactions" value="15"/>
</dbReference>
<dbReference type="STRING" id="284812.Q9Y7J1"/>
<dbReference type="PaxDb" id="4896-SPBC1778.04.1"/>
<dbReference type="EnsemblFungi" id="SPBC1778.04.1">
    <property type="protein sequence ID" value="SPBC1778.04.1:pep"/>
    <property type="gene ID" value="SPBC1778.04"/>
</dbReference>
<dbReference type="GeneID" id="2540044"/>
<dbReference type="KEGG" id="spo:2540044"/>
<dbReference type="PomBase" id="SPBC1778.04">
    <property type="gene designation" value="spo6"/>
</dbReference>
<dbReference type="VEuPathDB" id="FungiDB:SPBC1778.04"/>
<dbReference type="eggNOG" id="KOG4139">
    <property type="taxonomic scope" value="Eukaryota"/>
</dbReference>
<dbReference type="HOGENOM" id="CLU_576409_0_0_1"/>
<dbReference type="InParanoid" id="Q9Y7J1"/>
<dbReference type="OMA" id="GYCENCC"/>
<dbReference type="PhylomeDB" id="Q9Y7J1"/>
<dbReference type="PRO" id="PR:Q9Y7J1"/>
<dbReference type="Proteomes" id="UP000002485">
    <property type="component" value="Chromosome II"/>
</dbReference>
<dbReference type="GO" id="GO:0005829">
    <property type="term" value="C:cytosol"/>
    <property type="evidence" value="ECO:0007005"/>
    <property type="project" value="PomBase"/>
</dbReference>
<dbReference type="GO" id="GO:0005654">
    <property type="term" value="C:nucleoplasm"/>
    <property type="evidence" value="ECO:0000266"/>
    <property type="project" value="PomBase"/>
</dbReference>
<dbReference type="GO" id="GO:0005634">
    <property type="term" value="C:nucleus"/>
    <property type="evidence" value="ECO:0000314"/>
    <property type="project" value="PomBase"/>
</dbReference>
<dbReference type="GO" id="GO:0003676">
    <property type="term" value="F:nucleic acid binding"/>
    <property type="evidence" value="ECO:0007669"/>
    <property type="project" value="InterPro"/>
</dbReference>
<dbReference type="GO" id="GO:0043539">
    <property type="term" value="F:protein serine/threonine kinase activator activity"/>
    <property type="evidence" value="ECO:0000318"/>
    <property type="project" value="GO_Central"/>
</dbReference>
<dbReference type="GO" id="GO:0008270">
    <property type="term" value="F:zinc ion binding"/>
    <property type="evidence" value="ECO:0007669"/>
    <property type="project" value="UniProtKB-KW"/>
</dbReference>
<dbReference type="GO" id="GO:0030437">
    <property type="term" value="P:ascospore formation"/>
    <property type="evidence" value="ECO:0000315"/>
    <property type="project" value="PomBase"/>
</dbReference>
<dbReference type="GO" id="GO:0007135">
    <property type="term" value="P:meiosis II"/>
    <property type="evidence" value="ECO:0000315"/>
    <property type="project" value="PomBase"/>
</dbReference>
<dbReference type="GO" id="GO:0007165">
    <property type="term" value="P:signal transduction"/>
    <property type="evidence" value="ECO:0000305"/>
    <property type="project" value="PomBase"/>
</dbReference>
<dbReference type="CDD" id="cd00027">
    <property type="entry name" value="BRCT"/>
    <property type="match status" value="1"/>
</dbReference>
<dbReference type="FunFam" id="6.10.250.3410:FF:000001">
    <property type="entry name" value="Protein DBF4 homolog A"/>
    <property type="match status" value="1"/>
</dbReference>
<dbReference type="Gene3D" id="3.40.50.10190">
    <property type="entry name" value="BRCT domain"/>
    <property type="match status" value="1"/>
</dbReference>
<dbReference type="Gene3D" id="6.10.250.3410">
    <property type="entry name" value="DBF zinc finger"/>
    <property type="match status" value="1"/>
</dbReference>
<dbReference type="InterPro" id="IPR036420">
    <property type="entry name" value="BRCT_dom_sf"/>
</dbReference>
<dbReference type="InterPro" id="IPR055116">
    <property type="entry name" value="DBF4_BRCT"/>
</dbReference>
<dbReference type="InterPro" id="IPR013939">
    <property type="entry name" value="Regulatory_Dfp1/Him1"/>
</dbReference>
<dbReference type="InterPro" id="IPR051590">
    <property type="entry name" value="Replication_Regulatory_Kinase"/>
</dbReference>
<dbReference type="InterPro" id="IPR006572">
    <property type="entry name" value="Znf_DBF"/>
</dbReference>
<dbReference type="InterPro" id="IPR038545">
    <property type="entry name" value="Znf_DBF_sf"/>
</dbReference>
<dbReference type="PANTHER" id="PTHR15375">
    <property type="entry name" value="ACTIVATOR OF S-PHASE KINASE-RELATED"/>
    <property type="match status" value="1"/>
</dbReference>
<dbReference type="PANTHER" id="PTHR15375:SF26">
    <property type="entry name" value="PROTEIN CHIFFON"/>
    <property type="match status" value="1"/>
</dbReference>
<dbReference type="Pfam" id="PF22437">
    <property type="entry name" value="DBF4_BRCT"/>
    <property type="match status" value="1"/>
</dbReference>
<dbReference type="Pfam" id="PF08630">
    <property type="entry name" value="Dfp1_Him1_M"/>
    <property type="match status" value="1"/>
</dbReference>
<dbReference type="Pfam" id="PF07535">
    <property type="entry name" value="zf-DBF"/>
    <property type="match status" value="1"/>
</dbReference>
<dbReference type="SMART" id="SM00586">
    <property type="entry name" value="ZnF_DBF"/>
    <property type="match status" value="1"/>
</dbReference>
<dbReference type="SUPFAM" id="SSF52113">
    <property type="entry name" value="BRCT domain"/>
    <property type="match status" value="1"/>
</dbReference>
<dbReference type="PROSITE" id="PS51265">
    <property type="entry name" value="ZF_DBF4"/>
    <property type="match status" value="1"/>
</dbReference>
<feature type="chain" id="PRO_0000072139" description="Sporulation-specific protein 6">
    <location>
        <begin position="1"/>
        <end position="474"/>
    </location>
</feature>
<feature type="domain" description="BRCT">
    <location>
        <begin position="125"/>
        <end position="178"/>
    </location>
</feature>
<feature type="zinc finger region" description="DBF4-type" evidence="1">
    <location>
        <begin position="421"/>
        <end position="470"/>
    </location>
</feature>
<feature type="binding site" evidence="1">
    <location>
        <position position="428"/>
    </location>
    <ligand>
        <name>Zn(2+)</name>
        <dbReference type="ChEBI" id="CHEBI:29105"/>
    </ligand>
</feature>
<feature type="binding site" evidence="1">
    <location>
        <position position="431"/>
    </location>
    <ligand>
        <name>Zn(2+)</name>
        <dbReference type="ChEBI" id="CHEBI:29105"/>
    </ligand>
</feature>
<feature type="binding site" evidence="1">
    <location>
        <position position="441"/>
    </location>
    <ligand>
        <name>Zn(2+)</name>
        <dbReference type="ChEBI" id="CHEBI:29105"/>
    </ligand>
</feature>
<feature type="binding site" evidence="1">
    <location>
        <position position="447"/>
    </location>
    <ligand>
        <name>Zn(2+)</name>
        <dbReference type="ChEBI" id="CHEBI:29105"/>
    </ligand>
</feature>
<sequence length="474" mass="54749">MDFYSVKSQPFVRSPLVDQNPSIQNINEEVKRDIQNPLSYKTETSDKELCQTAACATSCSDWYPQQQTHMPHQNAFDSAKATAKMALPPTAFSNYCVKPSLTRNKDIPRTSIRVSKLRYWQRDYRLAFPNFIFYFDNVDEEIKRRVTQKINNLGAKVATLFTFEVTHFITTRTTDPEMCQPNDVLYLSKTANMKIWLLDKLLNRILFTLLNSDSLVNTSASCLQSLLDGEKVYGTSDKDFYVPSKNVEYFREYFLCIRDLSQYYKPIAVREWEKTLDSGEILWPSLAITAQGRCPFNTGRRRELKITKHNHPAHEIRKQLLSCTNQTNQNNVVKNSASVLVRQIMGDYNITESAVDGAKQMPTEFPKPENLLPVEKRAAMSPLNLLEPRLINKQNTLANQSPRQPPNAFDADPLAHKKVKIETKSGYCENCCERYKDLERHLGGKHHRRFAEKDENFQGLDDLFLLIRRPIRTN</sequence>
<gene>
    <name type="primary">spo6</name>
    <name type="ORF">SPBC1778.04</name>
</gene>
<evidence type="ECO:0000255" key="1">
    <source>
        <dbReference type="PROSITE-ProRule" id="PRU00600"/>
    </source>
</evidence>
<evidence type="ECO:0000269" key="2">
    <source>
    </source>
</evidence>
<keyword id="KW-0469">Meiosis</keyword>
<keyword id="KW-0479">Metal-binding</keyword>
<keyword id="KW-0539">Nucleus</keyword>
<keyword id="KW-1185">Reference proteome</keyword>
<keyword id="KW-0749">Sporulation</keyword>
<keyword id="KW-0862">Zinc</keyword>
<keyword id="KW-0863">Zinc-finger</keyword>
<comment type="function">
    <text evidence="2">May act as a kinase regulator. Essential for progression of meiosis II and sporulation.</text>
</comment>
<comment type="subcellular location">
    <subcellularLocation>
        <location evidence="2">Nucleus</location>
    </subcellularLocation>
</comment>
<name>SPO6_SCHPO</name>
<reference key="1">
    <citation type="journal article" date="2000" name="Genes Cells">
        <title>The Schizosaccharomyces pombe spo6+ gene encoding a nuclear protein with sequence similarity to budding yeast Dbf4 is required for meiotic second division and sporulation.</title>
        <authorList>
            <person name="Nakamura T."/>
            <person name="Kishida M."/>
            <person name="Shimoda C."/>
        </authorList>
    </citation>
    <scope>NUCLEOTIDE SEQUENCE [GENOMIC DNA]</scope>
    <scope>FUNCTION</scope>
    <scope>SUBCELLULAR LOCATION</scope>
    <source>
        <strain>ATCC 38364 / 968</strain>
    </source>
</reference>
<reference key="2">
    <citation type="journal article" date="2002" name="Nature">
        <title>The genome sequence of Schizosaccharomyces pombe.</title>
        <authorList>
            <person name="Wood V."/>
            <person name="Gwilliam R."/>
            <person name="Rajandream M.A."/>
            <person name="Lyne M.H."/>
            <person name="Lyne R."/>
            <person name="Stewart A."/>
            <person name="Sgouros J.G."/>
            <person name="Peat N."/>
            <person name="Hayles J."/>
            <person name="Baker S.G."/>
            <person name="Basham D."/>
            <person name="Bowman S."/>
            <person name="Brooks K."/>
            <person name="Brown D."/>
            <person name="Brown S."/>
            <person name="Chillingworth T."/>
            <person name="Churcher C.M."/>
            <person name="Collins M."/>
            <person name="Connor R."/>
            <person name="Cronin A."/>
            <person name="Davis P."/>
            <person name="Feltwell T."/>
            <person name="Fraser A."/>
            <person name="Gentles S."/>
            <person name="Goble A."/>
            <person name="Hamlin N."/>
            <person name="Harris D.E."/>
            <person name="Hidalgo J."/>
            <person name="Hodgson G."/>
            <person name="Holroyd S."/>
            <person name="Hornsby T."/>
            <person name="Howarth S."/>
            <person name="Huckle E.J."/>
            <person name="Hunt S."/>
            <person name="Jagels K."/>
            <person name="James K.D."/>
            <person name="Jones L."/>
            <person name="Jones M."/>
            <person name="Leather S."/>
            <person name="McDonald S."/>
            <person name="McLean J."/>
            <person name="Mooney P."/>
            <person name="Moule S."/>
            <person name="Mungall K.L."/>
            <person name="Murphy L.D."/>
            <person name="Niblett D."/>
            <person name="Odell C."/>
            <person name="Oliver K."/>
            <person name="O'Neil S."/>
            <person name="Pearson D."/>
            <person name="Quail M.A."/>
            <person name="Rabbinowitsch E."/>
            <person name="Rutherford K.M."/>
            <person name="Rutter S."/>
            <person name="Saunders D."/>
            <person name="Seeger K."/>
            <person name="Sharp S."/>
            <person name="Skelton J."/>
            <person name="Simmonds M.N."/>
            <person name="Squares R."/>
            <person name="Squares S."/>
            <person name="Stevens K."/>
            <person name="Taylor K."/>
            <person name="Taylor R.G."/>
            <person name="Tivey A."/>
            <person name="Walsh S.V."/>
            <person name="Warren T."/>
            <person name="Whitehead S."/>
            <person name="Woodward J.R."/>
            <person name="Volckaert G."/>
            <person name="Aert R."/>
            <person name="Robben J."/>
            <person name="Grymonprez B."/>
            <person name="Weltjens I."/>
            <person name="Vanstreels E."/>
            <person name="Rieger M."/>
            <person name="Schaefer M."/>
            <person name="Mueller-Auer S."/>
            <person name="Gabel C."/>
            <person name="Fuchs M."/>
            <person name="Duesterhoeft A."/>
            <person name="Fritzc C."/>
            <person name="Holzer E."/>
            <person name="Moestl D."/>
            <person name="Hilbert H."/>
            <person name="Borzym K."/>
            <person name="Langer I."/>
            <person name="Beck A."/>
            <person name="Lehrach H."/>
            <person name="Reinhardt R."/>
            <person name="Pohl T.M."/>
            <person name="Eger P."/>
            <person name="Zimmermann W."/>
            <person name="Wedler H."/>
            <person name="Wambutt R."/>
            <person name="Purnelle B."/>
            <person name="Goffeau A."/>
            <person name="Cadieu E."/>
            <person name="Dreano S."/>
            <person name="Gloux S."/>
            <person name="Lelaure V."/>
            <person name="Mottier S."/>
            <person name="Galibert F."/>
            <person name="Aves S.J."/>
            <person name="Xiang Z."/>
            <person name="Hunt C."/>
            <person name="Moore K."/>
            <person name="Hurst S.M."/>
            <person name="Lucas M."/>
            <person name="Rochet M."/>
            <person name="Gaillardin C."/>
            <person name="Tallada V.A."/>
            <person name="Garzon A."/>
            <person name="Thode G."/>
            <person name="Daga R.R."/>
            <person name="Cruzado L."/>
            <person name="Jimenez J."/>
            <person name="Sanchez M."/>
            <person name="del Rey F."/>
            <person name="Benito J."/>
            <person name="Dominguez A."/>
            <person name="Revuelta J.L."/>
            <person name="Moreno S."/>
            <person name="Armstrong J."/>
            <person name="Forsburg S.L."/>
            <person name="Cerutti L."/>
            <person name="Lowe T."/>
            <person name="McCombie W.R."/>
            <person name="Paulsen I."/>
            <person name="Potashkin J."/>
            <person name="Shpakovski G.V."/>
            <person name="Ussery D."/>
            <person name="Barrell B.G."/>
            <person name="Nurse P."/>
        </authorList>
    </citation>
    <scope>NUCLEOTIDE SEQUENCE [LARGE SCALE GENOMIC DNA]</scope>
    <source>
        <strain>972 / ATCC 24843</strain>
    </source>
</reference>
<proteinExistence type="predicted"/>
<accession>Q9Y7J1</accession>